<name>YVBT_BACSU</name>
<evidence type="ECO:0000305" key="1"/>
<comment type="similarity">
    <text evidence="1">To bacterial alkanal monooxygenase alpha and beta chains.</text>
</comment>
<gene>
    <name type="primary">yvbT</name>
    <name type="ordered locus">BSU33980</name>
</gene>
<accession>O32254</accession>
<keyword id="KW-1185">Reference proteome</keyword>
<reference key="1">
    <citation type="journal article" date="1997" name="Nature">
        <title>The complete genome sequence of the Gram-positive bacterium Bacillus subtilis.</title>
        <authorList>
            <person name="Kunst F."/>
            <person name="Ogasawara N."/>
            <person name="Moszer I."/>
            <person name="Albertini A.M."/>
            <person name="Alloni G."/>
            <person name="Azevedo V."/>
            <person name="Bertero M.G."/>
            <person name="Bessieres P."/>
            <person name="Bolotin A."/>
            <person name="Borchert S."/>
            <person name="Borriss R."/>
            <person name="Boursier L."/>
            <person name="Brans A."/>
            <person name="Braun M."/>
            <person name="Brignell S.C."/>
            <person name="Bron S."/>
            <person name="Brouillet S."/>
            <person name="Bruschi C.V."/>
            <person name="Caldwell B."/>
            <person name="Capuano V."/>
            <person name="Carter N.M."/>
            <person name="Choi S.-K."/>
            <person name="Codani J.-J."/>
            <person name="Connerton I.F."/>
            <person name="Cummings N.J."/>
            <person name="Daniel R.A."/>
            <person name="Denizot F."/>
            <person name="Devine K.M."/>
            <person name="Duesterhoeft A."/>
            <person name="Ehrlich S.D."/>
            <person name="Emmerson P.T."/>
            <person name="Entian K.-D."/>
            <person name="Errington J."/>
            <person name="Fabret C."/>
            <person name="Ferrari E."/>
            <person name="Foulger D."/>
            <person name="Fritz C."/>
            <person name="Fujita M."/>
            <person name="Fujita Y."/>
            <person name="Fuma S."/>
            <person name="Galizzi A."/>
            <person name="Galleron N."/>
            <person name="Ghim S.-Y."/>
            <person name="Glaser P."/>
            <person name="Goffeau A."/>
            <person name="Golightly E.J."/>
            <person name="Grandi G."/>
            <person name="Guiseppi G."/>
            <person name="Guy B.J."/>
            <person name="Haga K."/>
            <person name="Haiech J."/>
            <person name="Harwood C.R."/>
            <person name="Henaut A."/>
            <person name="Hilbert H."/>
            <person name="Holsappel S."/>
            <person name="Hosono S."/>
            <person name="Hullo M.-F."/>
            <person name="Itaya M."/>
            <person name="Jones L.-M."/>
            <person name="Joris B."/>
            <person name="Karamata D."/>
            <person name="Kasahara Y."/>
            <person name="Klaerr-Blanchard M."/>
            <person name="Klein C."/>
            <person name="Kobayashi Y."/>
            <person name="Koetter P."/>
            <person name="Koningstein G."/>
            <person name="Krogh S."/>
            <person name="Kumano M."/>
            <person name="Kurita K."/>
            <person name="Lapidus A."/>
            <person name="Lardinois S."/>
            <person name="Lauber J."/>
            <person name="Lazarevic V."/>
            <person name="Lee S.-M."/>
            <person name="Levine A."/>
            <person name="Liu H."/>
            <person name="Masuda S."/>
            <person name="Mauel C."/>
            <person name="Medigue C."/>
            <person name="Medina N."/>
            <person name="Mellado R.P."/>
            <person name="Mizuno M."/>
            <person name="Moestl D."/>
            <person name="Nakai S."/>
            <person name="Noback M."/>
            <person name="Noone D."/>
            <person name="O'Reilly M."/>
            <person name="Ogawa K."/>
            <person name="Ogiwara A."/>
            <person name="Oudega B."/>
            <person name="Park S.-H."/>
            <person name="Parro V."/>
            <person name="Pohl T.M."/>
            <person name="Portetelle D."/>
            <person name="Porwollik S."/>
            <person name="Prescott A.M."/>
            <person name="Presecan E."/>
            <person name="Pujic P."/>
            <person name="Purnelle B."/>
            <person name="Rapoport G."/>
            <person name="Rey M."/>
            <person name="Reynolds S."/>
            <person name="Rieger M."/>
            <person name="Rivolta C."/>
            <person name="Rocha E."/>
            <person name="Roche B."/>
            <person name="Rose M."/>
            <person name="Sadaie Y."/>
            <person name="Sato T."/>
            <person name="Scanlan E."/>
            <person name="Schleich S."/>
            <person name="Schroeter R."/>
            <person name="Scoffone F."/>
            <person name="Sekiguchi J."/>
            <person name="Sekowska A."/>
            <person name="Seror S.J."/>
            <person name="Serror P."/>
            <person name="Shin B.-S."/>
            <person name="Soldo B."/>
            <person name="Sorokin A."/>
            <person name="Tacconi E."/>
            <person name="Takagi T."/>
            <person name="Takahashi H."/>
            <person name="Takemaru K."/>
            <person name="Takeuchi M."/>
            <person name="Tamakoshi A."/>
            <person name="Tanaka T."/>
            <person name="Terpstra P."/>
            <person name="Tognoni A."/>
            <person name="Tosato V."/>
            <person name="Uchiyama S."/>
            <person name="Vandenbol M."/>
            <person name="Vannier F."/>
            <person name="Vassarotti A."/>
            <person name="Viari A."/>
            <person name="Wambutt R."/>
            <person name="Wedler E."/>
            <person name="Wedler H."/>
            <person name="Weitzenegger T."/>
            <person name="Winters P."/>
            <person name="Wipat A."/>
            <person name="Yamamoto H."/>
            <person name="Yamane K."/>
            <person name="Yasumoto K."/>
            <person name="Yata K."/>
            <person name="Yoshida K."/>
            <person name="Yoshikawa H.-F."/>
            <person name="Zumstein E."/>
            <person name="Yoshikawa H."/>
            <person name="Danchin A."/>
        </authorList>
    </citation>
    <scope>NUCLEOTIDE SEQUENCE [LARGE SCALE GENOMIC DNA]</scope>
    <source>
        <strain>168</strain>
    </source>
</reference>
<organism>
    <name type="scientific">Bacillus subtilis (strain 168)</name>
    <dbReference type="NCBI Taxonomy" id="224308"/>
    <lineage>
        <taxon>Bacteria</taxon>
        <taxon>Bacillati</taxon>
        <taxon>Bacillota</taxon>
        <taxon>Bacilli</taxon>
        <taxon>Bacillales</taxon>
        <taxon>Bacillaceae</taxon>
        <taxon>Bacillus</taxon>
    </lineage>
</organism>
<dbReference type="EMBL" id="AL009126">
    <property type="protein sequence ID" value="CAB15403.1"/>
    <property type="molecule type" value="Genomic_DNA"/>
</dbReference>
<dbReference type="PIR" id="D70030">
    <property type="entry name" value="D70030"/>
</dbReference>
<dbReference type="RefSeq" id="NP_391278.1">
    <property type="nucleotide sequence ID" value="NC_000964.3"/>
</dbReference>
<dbReference type="RefSeq" id="WP_003228318.1">
    <property type="nucleotide sequence ID" value="NZ_OZ025638.1"/>
</dbReference>
<dbReference type="SMR" id="O32254"/>
<dbReference type="FunCoup" id="O32254">
    <property type="interactions" value="111"/>
</dbReference>
<dbReference type="STRING" id="224308.BSU33980"/>
<dbReference type="PaxDb" id="224308-BSU33980"/>
<dbReference type="EnsemblBacteria" id="CAB15403">
    <property type="protein sequence ID" value="CAB15403"/>
    <property type="gene ID" value="BSU_33980"/>
</dbReference>
<dbReference type="GeneID" id="938634"/>
<dbReference type="KEGG" id="bsu:BSU33980"/>
<dbReference type="PATRIC" id="fig|224308.179.peg.3684"/>
<dbReference type="eggNOG" id="COG2141">
    <property type="taxonomic scope" value="Bacteria"/>
</dbReference>
<dbReference type="InParanoid" id="O32254"/>
<dbReference type="OrthoDB" id="9780518at2"/>
<dbReference type="PhylomeDB" id="O32254"/>
<dbReference type="BioCyc" id="BSUB:BSU33980-MONOMER"/>
<dbReference type="Proteomes" id="UP000001570">
    <property type="component" value="Chromosome"/>
</dbReference>
<dbReference type="GO" id="GO:0005829">
    <property type="term" value="C:cytosol"/>
    <property type="evidence" value="ECO:0000318"/>
    <property type="project" value="GO_Central"/>
</dbReference>
<dbReference type="GO" id="GO:0016705">
    <property type="term" value="F:oxidoreductase activity, acting on paired donors, with incorporation or reduction of molecular oxygen"/>
    <property type="evidence" value="ECO:0007669"/>
    <property type="project" value="InterPro"/>
</dbReference>
<dbReference type="CDD" id="cd00347">
    <property type="entry name" value="Flavin_utilizing_monoxygenases"/>
    <property type="match status" value="2"/>
</dbReference>
<dbReference type="FunFam" id="3.20.20.30:FF:000002">
    <property type="entry name" value="LLM class flavin-dependent oxidoreductase"/>
    <property type="match status" value="1"/>
</dbReference>
<dbReference type="Gene3D" id="3.20.20.30">
    <property type="entry name" value="Luciferase-like domain"/>
    <property type="match status" value="1"/>
</dbReference>
<dbReference type="InterPro" id="IPR050766">
    <property type="entry name" value="Bact_Lucif_Oxidored"/>
</dbReference>
<dbReference type="InterPro" id="IPR019949">
    <property type="entry name" value="CmoO-like"/>
</dbReference>
<dbReference type="InterPro" id="IPR011251">
    <property type="entry name" value="Luciferase-like_dom"/>
</dbReference>
<dbReference type="InterPro" id="IPR036661">
    <property type="entry name" value="Luciferase-like_sf"/>
</dbReference>
<dbReference type="NCBIfam" id="TIGR03558">
    <property type="entry name" value="oxido_grp_1"/>
    <property type="match status" value="1"/>
</dbReference>
<dbReference type="PANTHER" id="PTHR30137">
    <property type="entry name" value="LUCIFERASE-LIKE MONOOXYGENASE"/>
    <property type="match status" value="1"/>
</dbReference>
<dbReference type="PANTHER" id="PTHR30137:SF6">
    <property type="entry name" value="LUCIFERASE-LIKE MONOOXYGENASE"/>
    <property type="match status" value="1"/>
</dbReference>
<dbReference type="Pfam" id="PF00296">
    <property type="entry name" value="Bac_luciferase"/>
    <property type="match status" value="1"/>
</dbReference>
<dbReference type="SUPFAM" id="SSF51679">
    <property type="entry name" value="Bacterial luciferase-like"/>
    <property type="match status" value="1"/>
</dbReference>
<protein>
    <recommendedName>
        <fullName>Uncharacterized protein YvbT</fullName>
    </recommendedName>
</protein>
<feature type="chain" id="PRO_0000049939" description="Uncharacterized protein YvbT">
    <location>
        <begin position="1"/>
        <end position="336"/>
    </location>
</feature>
<proteinExistence type="predicted"/>
<sequence length="336" mass="37101">MSNNQRKDTLLSVLNLSPVVQGGTIAESFRNSMDLARRAEEWGYHRYWLAEHHNIEGVASSATAVLIGHIAGGTKKIRVGSGGIMLPNHSSLVIAEQFGTLETLYPGRIDLGLGRAPGTDQLTARALRRNINSGEDFPEQLEELRNYFKPSGNVRNQVRAIPGEGIDVPIWLLGSSGFSARLAGELGLPFAFAAHFSPANTVPALELYRNSFTPSDVLDEPYAMVGVTIIAADTNEKAQHLATSHYQRFLDLVRGTPNQLKPPVEDMDQIWSPYEKAMVNEQLSSTIVGGPEEVKAKLEDFVKTTQADEIMVNSETFEHADRMRSFEIIADVWKNR</sequence>